<organism>
    <name type="scientific">Buchnera aphidicola subsp. Acyrthosiphon pisum (strain 5A)</name>
    <dbReference type="NCBI Taxonomy" id="563178"/>
    <lineage>
        <taxon>Bacteria</taxon>
        <taxon>Pseudomonadati</taxon>
        <taxon>Pseudomonadota</taxon>
        <taxon>Gammaproteobacteria</taxon>
        <taxon>Enterobacterales</taxon>
        <taxon>Erwiniaceae</taxon>
        <taxon>Buchnera</taxon>
    </lineage>
</organism>
<evidence type="ECO:0000255" key="1">
    <source>
        <dbReference type="HAMAP-Rule" id="MF_02002"/>
    </source>
</evidence>
<accession>B8D8V0</accession>
<comment type="function">
    <text evidence="1">Catalyzes the attachment of isoleucine to tRNA(Ile). As IleRS can inadvertently accommodate and process structurally similar amino acids such as valine, to avoid such errors it has two additional distinct tRNA(Ile)-dependent editing activities. One activity is designated as 'pretransfer' editing and involves the hydrolysis of activated Val-AMP. The other activity is designated 'posttransfer' editing and involves deacylation of mischarged Val-tRNA(Ile).</text>
</comment>
<comment type="catalytic activity">
    <reaction evidence="1">
        <text>tRNA(Ile) + L-isoleucine + ATP = L-isoleucyl-tRNA(Ile) + AMP + diphosphate</text>
        <dbReference type="Rhea" id="RHEA:11060"/>
        <dbReference type="Rhea" id="RHEA-COMP:9666"/>
        <dbReference type="Rhea" id="RHEA-COMP:9695"/>
        <dbReference type="ChEBI" id="CHEBI:30616"/>
        <dbReference type="ChEBI" id="CHEBI:33019"/>
        <dbReference type="ChEBI" id="CHEBI:58045"/>
        <dbReference type="ChEBI" id="CHEBI:78442"/>
        <dbReference type="ChEBI" id="CHEBI:78528"/>
        <dbReference type="ChEBI" id="CHEBI:456215"/>
        <dbReference type="EC" id="6.1.1.5"/>
    </reaction>
</comment>
<comment type="cofactor">
    <cofactor evidence="1">
        <name>Zn(2+)</name>
        <dbReference type="ChEBI" id="CHEBI:29105"/>
    </cofactor>
    <text evidence="1">Binds 1 zinc ion per subunit.</text>
</comment>
<comment type="subunit">
    <text evidence="1">Monomer.</text>
</comment>
<comment type="subcellular location">
    <subcellularLocation>
        <location evidence="1">Cytoplasm</location>
    </subcellularLocation>
</comment>
<comment type="domain">
    <text evidence="1">IleRS has two distinct active sites: one for aminoacylation and one for editing. The misactivated valine is translocated from the active site to the editing site, which sterically excludes the correctly activated isoleucine. The single editing site contains two valyl binding pockets, one specific for each substrate (Val-AMP or Val-tRNA(Ile)).</text>
</comment>
<comment type="similarity">
    <text evidence="1">Belongs to the class-I aminoacyl-tRNA synthetase family. IleS type 1 subfamily.</text>
</comment>
<gene>
    <name evidence="1" type="primary">ileS</name>
    <name type="ordered locus">BUAP5A_147</name>
</gene>
<dbReference type="EC" id="6.1.1.5" evidence="1"/>
<dbReference type="EMBL" id="CP001161">
    <property type="protein sequence ID" value="ACL30522.1"/>
    <property type="molecule type" value="Genomic_DNA"/>
</dbReference>
<dbReference type="RefSeq" id="WP_009874105.1">
    <property type="nucleotide sequence ID" value="NC_011833.1"/>
</dbReference>
<dbReference type="SMR" id="B8D8V0"/>
<dbReference type="KEGG" id="bap:BUAP5A_147"/>
<dbReference type="HOGENOM" id="CLU_001493_7_0_6"/>
<dbReference type="OrthoDB" id="9810365at2"/>
<dbReference type="Proteomes" id="UP000006904">
    <property type="component" value="Chromosome"/>
</dbReference>
<dbReference type="GO" id="GO:0005829">
    <property type="term" value="C:cytosol"/>
    <property type="evidence" value="ECO:0007669"/>
    <property type="project" value="TreeGrafter"/>
</dbReference>
<dbReference type="GO" id="GO:0002161">
    <property type="term" value="F:aminoacyl-tRNA deacylase activity"/>
    <property type="evidence" value="ECO:0007669"/>
    <property type="project" value="InterPro"/>
</dbReference>
<dbReference type="GO" id="GO:0005524">
    <property type="term" value="F:ATP binding"/>
    <property type="evidence" value="ECO:0007669"/>
    <property type="project" value="UniProtKB-UniRule"/>
</dbReference>
<dbReference type="GO" id="GO:0004822">
    <property type="term" value="F:isoleucine-tRNA ligase activity"/>
    <property type="evidence" value="ECO:0007669"/>
    <property type="project" value="UniProtKB-UniRule"/>
</dbReference>
<dbReference type="GO" id="GO:0000049">
    <property type="term" value="F:tRNA binding"/>
    <property type="evidence" value="ECO:0007669"/>
    <property type="project" value="InterPro"/>
</dbReference>
<dbReference type="GO" id="GO:0008270">
    <property type="term" value="F:zinc ion binding"/>
    <property type="evidence" value="ECO:0007669"/>
    <property type="project" value="UniProtKB-UniRule"/>
</dbReference>
<dbReference type="GO" id="GO:0006428">
    <property type="term" value="P:isoleucyl-tRNA aminoacylation"/>
    <property type="evidence" value="ECO:0007669"/>
    <property type="project" value="UniProtKB-UniRule"/>
</dbReference>
<dbReference type="CDD" id="cd07960">
    <property type="entry name" value="Anticodon_Ia_Ile_BEm"/>
    <property type="match status" value="1"/>
</dbReference>
<dbReference type="CDD" id="cd00818">
    <property type="entry name" value="IleRS_core"/>
    <property type="match status" value="1"/>
</dbReference>
<dbReference type="FunFam" id="1.10.730.20:FF:000001">
    <property type="entry name" value="Isoleucine--tRNA ligase"/>
    <property type="match status" value="1"/>
</dbReference>
<dbReference type="FunFam" id="3.40.50.620:FF:000042">
    <property type="entry name" value="Isoleucine--tRNA ligase"/>
    <property type="match status" value="1"/>
</dbReference>
<dbReference type="FunFam" id="3.40.50.620:FF:000048">
    <property type="entry name" value="Isoleucine--tRNA ligase"/>
    <property type="match status" value="1"/>
</dbReference>
<dbReference type="Gene3D" id="1.10.730.20">
    <property type="match status" value="1"/>
</dbReference>
<dbReference type="Gene3D" id="3.40.50.620">
    <property type="entry name" value="HUPs"/>
    <property type="match status" value="2"/>
</dbReference>
<dbReference type="HAMAP" id="MF_02002">
    <property type="entry name" value="Ile_tRNA_synth_type1"/>
    <property type="match status" value="1"/>
</dbReference>
<dbReference type="InterPro" id="IPR001412">
    <property type="entry name" value="aa-tRNA-synth_I_CS"/>
</dbReference>
<dbReference type="InterPro" id="IPR002300">
    <property type="entry name" value="aa-tRNA-synth_Ia"/>
</dbReference>
<dbReference type="InterPro" id="IPR033708">
    <property type="entry name" value="Anticodon_Ile_BEm"/>
</dbReference>
<dbReference type="InterPro" id="IPR002301">
    <property type="entry name" value="Ile-tRNA-ligase"/>
</dbReference>
<dbReference type="InterPro" id="IPR023585">
    <property type="entry name" value="Ile-tRNA-ligase_type1"/>
</dbReference>
<dbReference type="InterPro" id="IPR050081">
    <property type="entry name" value="Ile-tRNA_ligase"/>
</dbReference>
<dbReference type="InterPro" id="IPR013155">
    <property type="entry name" value="M/V/L/I-tRNA-synth_anticd-bd"/>
</dbReference>
<dbReference type="InterPro" id="IPR014729">
    <property type="entry name" value="Rossmann-like_a/b/a_fold"/>
</dbReference>
<dbReference type="InterPro" id="IPR009080">
    <property type="entry name" value="tRNAsynth_Ia_anticodon-bd"/>
</dbReference>
<dbReference type="InterPro" id="IPR009008">
    <property type="entry name" value="Val/Leu/Ile-tRNA-synth_edit"/>
</dbReference>
<dbReference type="InterPro" id="IPR010663">
    <property type="entry name" value="Znf_FPG/IleRS"/>
</dbReference>
<dbReference type="NCBIfam" id="TIGR00392">
    <property type="entry name" value="ileS"/>
    <property type="match status" value="1"/>
</dbReference>
<dbReference type="PANTHER" id="PTHR42765:SF1">
    <property type="entry name" value="ISOLEUCINE--TRNA LIGASE, MITOCHONDRIAL"/>
    <property type="match status" value="1"/>
</dbReference>
<dbReference type="PANTHER" id="PTHR42765">
    <property type="entry name" value="SOLEUCYL-TRNA SYNTHETASE"/>
    <property type="match status" value="1"/>
</dbReference>
<dbReference type="Pfam" id="PF08264">
    <property type="entry name" value="Anticodon_1"/>
    <property type="match status" value="1"/>
</dbReference>
<dbReference type="Pfam" id="PF00133">
    <property type="entry name" value="tRNA-synt_1"/>
    <property type="match status" value="1"/>
</dbReference>
<dbReference type="Pfam" id="PF06827">
    <property type="entry name" value="zf-FPG_IleRS"/>
    <property type="match status" value="1"/>
</dbReference>
<dbReference type="PRINTS" id="PR00984">
    <property type="entry name" value="TRNASYNTHILE"/>
</dbReference>
<dbReference type="SUPFAM" id="SSF47323">
    <property type="entry name" value="Anticodon-binding domain of a subclass of class I aminoacyl-tRNA synthetases"/>
    <property type="match status" value="1"/>
</dbReference>
<dbReference type="SUPFAM" id="SSF52374">
    <property type="entry name" value="Nucleotidylyl transferase"/>
    <property type="match status" value="1"/>
</dbReference>
<dbReference type="SUPFAM" id="SSF50677">
    <property type="entry name" value="ValRS/IleRS/LeuRS editing domain"/>
    <property type="match status" value="1"/>
</dbReference>
<dbReference type="PROSITE" id="PS00178">
    <property type="entry name" value="AA_TRNA_LIGASE_I"/>
    <property type="match status" value="1"/>
</dbReference>
<reference key="1">
    <citation type="journal article" date="2009" name="Science">
        <title>The dynamics and time scale of ongoing genomic erosion in symbiotic bacteria.</title>
        <authorList>
            <person name="Moran N.A."/>
            <person name="McLaughlin H.J."/>
            <person name="Sorek R."/>
        </authorList>
    </citation>
    <scope>NUCLEOTIDE SEQUENCE [LARGE SCALE GENOMIC DNA]</scope>
    <source>
        <strain>5A</strain>
    </source>
</reference>
<sequence>MDDYKDTLNLPKTLFSMRGNLSKKEPNILKSWNENNLYKLIRKKNQEKKIFFLHDGPPYANGNIHIGHAVNKILKDIIIKSKNMSGFDAPYIPSWDCHGLPIEQKVEEKIKSNQGEISTTEFQEKCRKYAQDQVEKQKKDFIRLGVIGDWDNPHLTMNFKNEANIIKTLSKIVQKKHLYQDFKPIHWCLKCASSLSEAEIEYSKKKSDSIIVGFKFKYRSIIEKLFDFQISNKKEIHLLIWTTTPWTLPSSKAISIHPDFQYQLIETERCYLIIAKELVEKTLNTLKIKKSIIRNYVKGRFLEKMICLHPFLKNIDLPVILGKHVTLESGTGAVHTAPDHGLEDYIISQKYNIKTSNIVNFKGEYISNTHDKLDGVNVLEANSIIIELLIKNNTFFHHESLIHSYPHCWRHKSPVIYRATPQWFIDIDQKQLRIKLLQEIKKVRWIPEWGESRIGEMIKKRPDWCISRQRKWGVPMSIFIHKNTRKIHPNTFVFMKKIAKKVELEGLQVWWNIDSKEILGEEYQSYEKILDILDVWFESGNTHTTINYKNKNYTKKNADMFLEGSDQHRGWFMSSLIISTLISEKKPYSEVLTHGFVVDGKGQKMSKSIGNTISPNEIVDTLGADILRLWVASSNYSNDISISNEILKSSSDIYRRIRNTARFMLANISDFDPKKNIISKENMVLLDKWAIGQTKIVQEEIIQHYNNYNFHAVIQRLMYFCSIEMGSFYLDIIKDRQYTLKKHSQERRSSQTAIYYIINSLVRWIAPILSFTADEIWSYLPENNSQYVFMEEWFDKLFYLDQDDLFNYQFWNEIITIKHEINKFLEEAIQNKTINNSLETSIILYVSHELSNKLKILEQETKFIFLTSDIQIKLYDTAPKNAKKSKIVPYLKVSLEKIKGKKCPRCWHYFNFTKKNIKNSDICNRCILNTIGNGEKRIFI</sequence>
<name>SYI_BUCA5</name>
<feature type="chain" id="PRO_1000189133" description="Isoleucine--tRNA ligase">
    <location>
        <begin position="1"/>
        <end position="940"/>
    </location>
</feature>
<feature type="short sequence motif" description="'HIGH' region">
    <location>
        <begin position="58"/>
        <end position="68"/>
    </location>
</feature>
<feature type="short sequence motif" description="'KMSKS' region">
    <location>
        <begin position="604"/>
        <end position="608"/>
    </location>
</feature>
<feature type="binding site" evidence="1">
    <location>
        <position position="563"/>
    </location>
    <ligand>
        <name>L-isoleucyl-5'-AMP</name>
        <dbReference type="ChEBI" id="CHEBI:178002"/>
    </ligand>
</feature>
<feature type="binding site" evidence="1">
    <location>
        <position position="607"/>
    </location>
    <ligand>
        <name>ATP</name>
        <dbReference type="ChEBI" id="CHEBI:30616"/>
    </ligand>
</feature>
<feature type="binding site" evidence="1">
    <location>
        <position position="903"/>
    </location>
    <ligand>
        <name>Zn(2+)</name>
        <dbReference type="ChEBI" id="CHEBI:29105"/>
    </ligand>
</feature>
<feature type="binding site" evidence="1">
    <location>
        <position position="906"/>
    </location>
    <ligand>
        <name>Zn(2+)</name>
        <dbReference type="ChEBI" id="CHEBI:29105"/>
    </ligand>
</feature>
<feature type="binding site" evidence="1">
    <location>
        <position position="923"/>
    </location>
    <ligand>
        <name>Zn(2+)</name>
        <dbReference type="ChEBI" id="CHEBI:29105"/>
    </ligand>
</feature>
<feature type="binding site" evidence="1">
    <location>
        <position position="926"/>
    </location>
    <ligand>
        <name>Zn(2+)</name>
        <dbReference type="ChEBI" id="CHEBI:29105"/>
    </ligand>
</feature>
<proteinExistence type="inferred from homology"/>
<keyword id="KW-0030">Aminoacyl-tRNA synthetase</keyword>
<keyword id="KW-0067">ATP-binding</keyword>
<keyword id="KW-0963">Cytoplasm</keyword>
<keyword id="KW-0436">Ligase</keyword>
<keyword id="KW-0479">Metal-binding</keyword>
<keyword id="KW-0547">Nucleotide-binding</keyword>
<keyword id="KW-0648">Protein biosynthesis</keyword>
<keyword id="KW-0862">Zinc</keyword>
<protein>
    <recommendedName>
        <fullName evidence="1">Isoleucine--tRNA ligase</fullName>
        <ecNumber evidence="1">6.1.1.5</ecNumber>
    </recommendedName>
    <alternativeName>
        <fullName evidence="1">Isoleucyl-tRNA synthetase</fullName>
        <shortName evidence="1">IleRS</shortName>
    </alternativeName>
</protein>